<comment type="function">
    <text evidence="2 4">Beta-adrenergic receptors mediate the catecholamine-induced activation of adenylate cyclase through the action of G proteins. This receptor binds epinephrine and norepinephrine with approximately equal affinity. Mediates Ras activation through G(s)-alpha- and cAMP-mediated signaling (By similarity). Involved in the regulation of sleep/wake behaviors (By similarity).</text>
</comment>
<comment type="subunit">
    <text evidence="2">Interacts (via C-terminus PDZ motif) with RAPGEF2; the interaction is direct. Interacts with GOPC, MAGI3 and DLG4 (By similarity).</text>
</comment>
<comment type="subcellular location">
    <subcellularLocation>
        <location evidence="3">Cell membrane</location>
        <topology evidence="3">Multi-pass membrane protein</topology>
    </subcellularLocation>
    <subcellularLocation>
        <location evidence="1">Early endosome</location>
    </subcellularLocation>
    <text evidence="1">Colocalizes with RAPGEF2 at the plasma membrane. Found in the Golgi upon GOPC overexpression (By similarity).</text>
</comment>
<comment type="domain">
    <text evidence="1">The PDZ domain-binding motif mediates competitive interactions with GOPC, MAGI3 and DLG4 and plays a role in subcellular location of the receptor.</text>
</comment>
<comment type="PTM">
    <text evidence="1">Homologous desensitization of the receptor is mediated by its phosphorylation by beta-adrenergic receptor kinase.</text>
</comment>
<comment type="similarity">
    <text evidence="6">Belongs to the G-protein coupled receptor 1 family. Adrenergic receptor subfamily. ADRB1 sub-subfamily.</text>
</comment>
<feature type="chain" id="PRO_0000069125" description="Beta-1 adrenergic receptor">
    <location>
        <begin position="1"/>
        <end position="467"/>
    </location>
</feature>
<feature type="topological domain" description="Extracellular" evidence="1">
    <location>
        <begin position="1"/>
        <end position="55"/>
    </location>
</feature>
<feature type="transmembrane region" description="Helical; Name=1" evidence="1">
    <location>
        <begin position="56"/>
        <end position="84"/>
    </location>
</feature>
<feature type="topological domain" description="Cytoplasmic" evidence="1">
    <location>
        <begin position="85"/>
        <end position="93"/>
    </location>
</feature>
<feature type="transmembrane region" description="Helical; Name=2" evidence="1">
    <location>
        <begin position="94"/>
        <end position="120"/>
    </location>
</feature>
<feature type="transmembrane region" description="Helical; Name=3" evidence="1">
    <location>
        <begin position="133"/>
        <end position="154"/>
    </location>
</feature>
<feature type="topological domain" description="Cytoplasmic" evidence="1">
    <location>
        <begin position="155"/>
        <end position="172"/>
    </location>
</feature>
<feature type="transmembrane region" description="Helical; Name=4" evidence="1">
    <location>
        <begin position="173"/>
        <end position="196"/>
    </location>
</feature>
<feature type="topological domain" description="Extracellular" evidence="1">
    <location>
        <begin position="197"/>
        <end position="222"/>
    </location>
</feature>
<feature type="transmembrane region" description="Helical; Name=5" evidence="1">
    <location>
        <begin position="223"/>
        <end position="248"/>
    </location>
</feature>
<feature type="topological domain" description="Cytoplasmic" evidence="1">
    <location>
        <begin position="249"/>
        <end position="306"/>
    </location>
</feature>
<feature type="transmembrane region" description="Helical; Name=6" evidence="1">
    <location>
        <begin position="307"/>
        <end position="336"/>
    </location>
</feature>
<feature type="topological domain" description="Extracellular" evidence="1">
    <location>
        <begin position="337"/>
        <end position="341"/>
    </location>
</feature>
<feature type="transmembrane region" description="Helical; Name=7" evidence="1">
    <location>
        <begin position="342"/>
        <end position="364"/>
    </location>
</feature>
<feature type="topological domain" description="Cytoplasmic" evidence="1">
    <location>
        <begin position="365"/>
        <end position="467"/>
    </location>
</feature>
<feature type="region of interest" description="Disordered" evidence="7">
    <location>
        <begin position="406"/>
        <end position="467"/>
    </location>
</feature>
<feature type="short sequence motif" description="PDZ-Binding" evidence="1">
    <location>
        <begin position="464"/>
        <end position="467"/>
    </location>
</feature>
<feature type="compositionally biased region" description="Acidic residues" evidence="7">
    <location>
        <begin position="415"/>
        <end position="426"/>
    </location>
</feature>
<feature type="modified residue" description="Phosphoserine" evidence="3">
    <location>
        <position position="415"/>
    </location>
</feature>
<feature type="lipid moiety-binding region" description="S-palmitoyl cysteine" evidence="1">
    <location>
        <position position="379"/>
    </location>
</feature>
<feature type="glycosylation site" description="N-linked (GlcNAc...) asparagine" evidence="5">
    <location>
        <position position="15"/>
    </location>
</feature>
<feature type="disulfide bond" evidence="6">
    <location>
        <begin position="131"/>
        <end position="216"/>
    </location>
</feature>
<feature type="disulfide bond" evidence="6">
    <location>
        <begin position="209"/>
        <end position="215"/>
    </location>
</feature>
<sequence length="467" mass="50272">MGAGALALGASEPCNLSFAAPVPDGAATAARLLVPXSPLRLAADLGQRGTPLLSQQWTVGMGLLMAFIVLLIVAGNVLVIVAIAKTPRLQTLTNLFIMSLASADLVMGLLVVPFGATIVVWGRWEYGSFFCELWTSVDVLCVTASIETLCVIALDRYLAITSPFRYQSLLTRARARALVCTVWAISALVSFLPIFMQWWGDKDAKASRCYNDPECCDFIINEGYAITSSVVSFYVPLCIMAFVYLRVFREAQKQVKKIDSCERRFLSGPARLPSPALSPGAPLPAAAVANGRANKRRPSRLVALREQKALKTLGIIMGVFTLCWLPFFLANVVKAFHRDLVPDRLFVFFNWLGYANSAFNPIIYCRSPDFRKAFQRLLCCARRAACGSHGAAGDPPRAAGCLAVARPSPSPGAASDDDDDDDEDDVGAAPPVRLLQPWAGYNGGAAANSDSSPDEPSRPGCGSESKV</sequence>
<proteinExistence type="evidence at transcript level"/>
<name>ADRB1_SHEEP</name>
<evidence type="ECO:0000250" key="1"/>
<evidence type="ECO:0000250" key="2">
    <source>
        <dbReference type="UniProtKB" id="P08588"/>
    </source>
</evidence>
<evidence type="ECO:0000250" key="3">
    <source>
        <dbReference type="UniProtKB" id="P18090"/>
    </source>
</evidence>
<evidence type="ECO:0000250" key="4">
    <source>
        <dbReference type="UniProtKB" id="P34971"/>
    </source>
</evidence>
<evidence type="ECO:0000255" key="5"/>
<evidence type="ECO:0000255" key="6">
    <source>
        <dbReference type="PROSITE-ProRule" id="PRU00521"/>
    </source>
</evidence>
<evidence type="ECO:0000256" key="7">
    <source>
        <dbReference type="SAM" id="MobiDB-lite"/>
    </source>
</evidence>
<protein>
    <recommendedName>
        <fullName>Beta-1 adrenergic receptor</fullName>
    </recommendedName>
    <alternativeName>
        <fullName>Beta-1 adrenoreceptor</fullName>
        <shortName>BETA1AR</shortName>
        <shortName>Beta-1 adrenoceptor</shortName>
    </alternativeName>
</protein>
<organism>
    <name type="scientific">Ovis aries</name>
    <name type="common">Sheep</name>
    <dbReference type="NCBI Taxonomy" id="9940"/>
    <lineage>
        <taxon>Eukaryota</taxon>
        <taxon>Metazoa</taxon>
        <taxon>Chordata</taxon>
        <taxon>Craniata</taxon>
        <taxon>Vertebrata</taxon>
        <taxon>Euteleostomi</taxon>
        <taxon>Mammalia</taxon>
        <taxon>Eutheria</taxon>
        <taxon>Laurasiatheria</taxon>
        <taxon>Artiodactyla</taxon>
        <taxon>Ruminantia</taxon>
        <taxon>Pecora</taxon>
        <taxon>Bovidae</taxon>
        <taxon>Caprinae</taxon>
        <taxon>Ovis</taxon>
    </lineage>
</organism>
<gene>
    <name type="primary">ADRB1</name>
    <name type="synonym">BAR1</name>
</gene>
<accession>Q28927</accession>
<dbReference type="EMBL" id="AF072433">
    <property type="protein sequence ID" value="AAC25414.1"/>
    <property type="molecule type" value="Genomic_DNA"/>
</dbReference>
<dbReference type="EMBL" id="S81783">
    <property type="protein sequence ID" value="AAB36304.1"/>
    <property type="molecule type" value="mRNA"/>
</dbReference>
<dbReference type="STRING" id="9940.ENSOARP00000014766"/>
<dbReference type="GlyCosmos" id="Q28927">
    <property type="glycosylation" value="1 site, No reported glycans"/>
</dbReference>
<dbReference type="PaxDb" id="9940-ENSOARP00000014766"/>
<dbReference type="eggNOG" id="KOG3656">
    <property type="taxonomic scope" value="Eukaryota"/>
</dbReference>
<dbReference type="Proteomes" id="UP000002356">
    <property type="component" value="Unplaced"/>
</dbReference>
<dbReference type="GO" id="GO:0005769">
    <property type="term" value="C:early endosome"/>
    <property type="evidence" value="ECO:0000250"/>
    <property type="project" value="UniProtKB"/>
</dbReference>
<dbReference type="GO" id="GO:0005886">
    <property type="term" value="C:plasma membrane"/>
    <property type="evidence" value="ECO:0000250"/>
    <property type="project" value="UniProtKB"/>
</dbReference>
<dbReference type="GO" id="GO:0004940">
    <property type="term" value="F:beta1-adrenergic receptor activity"/>
    <property type="evidence" value="ECO:0000250"/>
    <property type="project" value="UniProtKB"/>
</dbReference>
<dbReference type="GO" id="GO:0071880">
    <property type="term" value="P:adenylate cyclase-activating adrenergic receptor signaling pathway"/>
    <property type="evidence" value="ECO:0000250"/>
    <property type="project" value="UniProtKB"/>
</dbReference>
<dbReference type="GO" id="GO:0002025">
    <property type="term" value="P:norepinephrine-epinephrine-mediated vasodilation involved in regulation of systemic arterial blood pressure"/>
    <property type="evidence" value="ECO:0007669"/>
    <property type="project" value="TreeGrafter"/>
</dbReference>
<dbReference type="GO" id="GO:0045823">
    <property type="term" value="P:positive regulation of heart contraction"/>
    <property type="evidence" value="ECO:0007669"/>
    <property type="project" value="InterPro"/>
</dbReference>
<dbReference type="GO" id="GO:0043410">
    <property type="term" value="P:positive regulation of MAPK cascade"/>
    <property type="evidence" value="ECO:0007669"/>
    <property type="project" value="TreeGrafter"/>
</dbReference>
<dbReference type="GO" id="GO:0045187">
    <property type="term" value="P:regulation of circadian sleep/wake cycle, sleep"/>
    <property type="evidence" value="ECO:0000250"/>
    <property type="project" value="UniProtKB"/>
</dbReference>
<dbReference type="CDD" id="cd15958">
    <property type="entry name" value="7tmA_Beta1_AR"/>
    <property type="match status" value="1"/>
</dbReference>
<dbReference type="FunFam" id="1.20.1070.10:FF:000057">
    <property type="entry name" value="Beta-1 adrenergic receptor"/>
    <property type="match status" value="1"/>
</dbReference>
<dbReference type="Gene3D" id="1.20.1070.10">
    <property type="entry name" value="Rhodopsin 7-helix transmembrane proteins"/>
    <property type="match status" value="1"/>
</dbReference>
<dbReference type="InterPro" id="IPR002233">
    <property type="entry name" value="ADR_fam"/>
</dbReference>
<dbReference type="InterPro" id="IPR000507">
    <property type="entry name" value="ADRB1_rcpt"/>
</dbReference>
<dbReference type="InterPro" id="IPR000276">
    <property type="entry name" value="GPCR_Rhodpsn"/>
</dbReference>
<dbReference type="InterPro" id="IPR017452">
    <property type="entry name" value="GPCR_Rhodpsn_7TM"/>
</dbReference>
<dbReference type="PANTHER" id="PTHR24248">
    <property type="entry name" value="ADRENERGIC RECEPTOR-RELATED G-PROTEIN COUPLED RECEPTOR"/>
    <property type="match status" value="1"/>
</dbReference>
<dbReference type="PANTHER" id="PTHR24248:SF54">
    <property type="entry name" value="BETA-1 ADRENERGIC RECEPTOR"/>
    <property type="match status" value="1"/>
</dbReference>
<dbReference type="Pfam" id="PF00001">
    <property type="entry name" value="7tm_1"/>
    <property type="match status" value="1"/>
</dbReference>
<dbReference type="PRINTS" id="PR01103">
    <property type="entry name" value="ADRENERGICR"/>
</dbReference>
<dbReference type="PRINTS" id="PR00561">
    <property type="entry name" value="ADRENRGCB1AR"/>
</dbReference>
<dbReference type="PRINTS" id="PR00237">
    <property type="entry name" value="GPCRRHODOPSN"/>
</dbReference>
<dbReference type="SMART" id="SM01381">
    <property type="entry name" value="7TM_GPCR_Srsx"/>
    <property type="match status" value="1"/>
</dbReference>
<dbReference type="SUPFAM" id="SSF81321">
    <property type="entry name" value="Family A G protein-coupled receptor-like"/>
    <property type="match status" value="1"/>
</dbReference>
<dbReference type="PROSITE" id="PS00237">
    <property type="entry name" value="G_PROTEIN_RECEP_F1_1"/>
    <property type="match status" value="1"/>
</dbReference>
<dbReference type="PROSITE" id="PS50262">
    <property type="entry name" value="G_PROTEIN_RECEP_F1_2"/>
    <property type="match status" value="1"/>
</dbReference>
<keyword id="KW-1003">Cell membrane</keyword>
<keyword id="KW-1015">Disulfide bond</keyword>
<keyword id="KW-0967">Endosome</keyword>
<keyword id="KW-0297">G-protein coupled receptor</keyword>
<keyword id="KW-0325">Glycoprotein</keyword>
<keyword id="KW-0449">Lipoprotein</keyword>
<keyword id="KW-0472">Membrane</keyword>
<keyword id="KW-0564">Palmitate</keyword>
<keyword id="KW-0597">Phosphoprotein</keyword>
<keyword id="KW-0675">Receptor</keyword>
<keyword id="KW-1185">Reference proteome</keyword>
<keyword id="KW-0807">Transducer</keyword>
<keyword id="KW-0812">Transmembrane</keyword>
<keyword id="KW-1133">Transmembrane helix</keyword>
<reference key="1">
    <citation type="journal article" date="1995" name="Biochem. Biophys. Res. Commun.">
        <title>Transcription initiation is localized to a TATAless region in the ovine beta 1 adrenergic receptor gene.</title>
        <authorList>
            <person name="Padbury J.F."/>
            <person name="Tseng Y.-T."/>
            <person name="Waschek J.A."/>
        </authorList>
    </citation>
    <scope>NUCLEOTIDE SEQUENCE [GENOMIC DNA]</scope>
</reference>
<reference key="2">
    <citation type="journal article" date="1995" name="Reprod. Fertil. Dev.">
        <title>A cloning strategy for G-protein-coupled hormone receptors: the ovine beta 1-adrenergic receptor.</title>
        <authorList>
            <person name="Padbury J.F."/>
            <person name="Tseng Y.-T."/>
            <person name="Waschek J.A."/>
        </authorList>
    </citation>
    <scope>NUCLEOTIDE SEQUENCE [MRNA] OF 90-435</scope>
</reference>